<dbReference type="EMBL" id="AF378568">
    <property type="protein sequence ID" value="AAN87133.1"/>
    <property type="molecule type" value="Genomic_DNA"/>
</dbReference>
<dbReference type="EMBL" id="AE016816">
    <property type="protein sequence ID" value="AAS51237.1"/>
    <property type="molecule type" value="Genomic_DNA"/>
</dbReference>
<dbReference type="RefSeq" id="NP_983413.1">
    <property type="nucleotide sequence ID" value="NM_208766.1"/>
</dbReference>
<dbReference type="SMR" id="Q8J1G7"/>
<dbReference type="FunCoup" id="Q8J1G7">
    <property type="interactions" value="138"/>
</dbReference>
<dbReference type="STRING" id="284811.Q8J1G7"/>
<dbReference type="EnsemblFungi" id="AAS51237">
    <property type="protein sequence ID" value="AAS51237"/>
    <property type="gene ID" value="AGOS_ACR010C"/>
</dbReference>
<dbReference type="GeneID" id="4619538"/>
<dbReference type="KEGG" id="ago:AGOS_ACR010C"/>
<dbReference type="eggNOG" id="KOG0243">
    <property type="taxonomic scope" value="Eukaryota"/>
</dbReference>
<dbReference type="HOGENOM" id="CLU_001485_33_3_1"/>
<dbReference type="InParanoid" id="Q8J1G7"/>
<dbReference type="OMA" id="EVQECKR"/>
<dbReference type="OrthoDB" id="3176171at2759"/>
<dbReference type="Proteomes" id="UP000000591">
    <property type="component" value="Chromosome III"/>
</dbReference>
<dbReference type="GO" id="GO:0005737">
    <property type="term" value="C:cytoplasm"/>
    <property type="evidence" value="ECO:0007669"/>
    <property type="project" value="UniProtKB-KW"/>
</dbReference>
<dbReference type="GO" id="GO:0072686">
    <property type="term" value="C:mitotic spindle"/>
    <property type="evidence" value="ECO:0000318"/>
    <property type="project" value="GO_Central"/>
</dbReference>
<dbReference type="GO" id="GO:0005634">
    <property type="term" value="C:nucleus"/>
    <property type="evidence" value="ECO:0000318"/>
    <property type="project" value="GO_Central"/>
</dbReference>
<dbReference type="GO" id="GO:0005876">
    <property type="term" value="C:spindle microtubule"/>
    <property type="evidence" value="ECO:0000318"/>
    <property type="project" value="GO_Central"/>
</dbReference>
<dbReference type="GO" id="GO:0005524">
    <property type="term" value="F:ATP binding"/>
    <property type="evidence" value="ECO:0007669"/>
    <property type="project" value="UniProtKB-KW"/>
</dbReference>
<dbReference type="GO" id="GO:0008017">
    <property type="term" value="F:microtubule binding"/>
    <property type="evidence" value="ECO:0007669"/>
    <property type="project" value="InterPro"/>
</dbReference>
<dbReference type="GO" id="GO:0008569">
    <property type="term" value="F:minus-end-directed microtubule motor activity"/>
    <property type="evidence" value="ECO:0000318"/>
    <property type="project" value="GO_Central"/>
</dbReference>
<dbReference type="GO" id="GO:0008574">
    <property type="term" value="F:plus-end-directed microtubule motor activity"/>
    <property type="evidence" value="ECO:0000318"/>
    <property type="project" value="GO_Central"/>
</dbReference>
<dbReference type="GO" id="GO:0051301">
    <property type="term" value="P:cell division"/>
    <property type="evidence" value="ECO:0007669"/>
    <property type="project" value="UniProtKB-KW"/>
</dbReference>
<dbReference type="GO" id="GO:0000073">
    <property type="term" value="P:initial mitotic spindle pole body separation"/>
    <property type="evidence" value="ECO:0000318"/>
    <property type="project" value="GO_Central"/>
</dbReference>
<dbReference type="GO" id="GO:0007018">
    <property type="term" value="P:microtubule-based movement"/>
    <property type="evidence" value="ECO:0007669"/>
    <property type="project" value="InterPro"/>
</dbReference>
<dbReference type="GO" id="GO:0090307">
    <property type="term" value="P:mitotic spindle assembly"/>
    <property type="evidence" value="ECO:0000318"/>
    <property type="project" value="GO_Central"/>
</dbReference>
<dbReference type="GO" id="GO:0061805">
    <property type="term" value="P:mitotic spindle elongation (spindle phase three)"/>
    <property type="evidence" value="ECO:0000250"/>
    <property type="project" value="UniProtKB"/>
</dbReference>
<dbReference type="GO" id="GO:0051231">
    <property type="term" value="P:spindle elongation"/>
    <property type="evidence" value="ECO:0000318"/>
    <property type="project" value="GO_Central"/>
</dbReference>
<dbReference type="CDD" id="cd01364">
    <property type="entry name" value="KISc_BimC_Eg5"/>
    <property type="match status" value="1"/>
</dbReference>
<dbReference type="Gene3D" id="3.40.850.10">
    <property type="entry name" value="Kinesin motor domain"/>
    <property type="match status" value="1"/>
</dbReference>
<dbReference type="InterPro" id="IPR047149">
    <property type="entry name" value="KIF11-like"/>
</dbReference>
<dbReference type="InterPro" id="IPR047241">
    <property type="entry name" value="KIF11-like_kin_motor_dom"/>
</dbReference>
<dbReference type="InterPro" id="IPR019821">
    <property type="entry name" value="Kinesin_motor_CS"/>
</dbReference>
<dbReference type="InterPro" id="IPR001752">
    <property type="entry name" value="Kinesin_motor_dom"/>
</dbReference>
<dbReference type="InterPro" id="IPR036961">
    <property type="entry name" value="Kinesin_motor_dom_sf"/>
</dbReference>
<dbReference type="InterPro" id="IPR027417">
    <property type="entry name" value="P-loop_NTPase"/>
</dbReference>
<dbReference type="PANTHER" id="PTHR47970:SF12">
    <property type="entry name" value="KINESIN FAMILY MEMBER 11"/>
    <property type="match status" value="1"/>
</dbReference>
<dbReference type="PANTHER" id="PTHR47970">
    <property type="entry name" value="KINESIN-LIKE PROTEIN KIF11"/>
    <property type="match status" value="1"/>
</dbReference>
<dbReference type="Pfam" id="PF00225">
    <property type="entry name" value="Kinesin"/>
    <property type="match status" value="2"/>
</dbReference>
<dbReference type="PRINTS" id="PR00380">
    <property type="entry name" value="KINESINHEAVY"/>
</dbReference>
<dbReference type="SMART" id="SM00129">
    <property type="entry name" value="KISc"/>
    <property type="match status" value="1"/>
</dbReference>
<dbReference type="SUPFAM" id="SSF52540">
    <property type="entry name" value="P-loop containing nucleoside triphosphate hydrolases"/>
    <property type="match status" value="1"/>
</dbReference>
<dbReference type="PROSITE" id="PS00411">
    <property type="entry name" value="KINESIN_MOTOR_1"/>
    <property type="match status" value="1"/>
</dbReference>
<dbReference type="PROSITE" id="PS50067">
    <property type="entry name" value="KINESIN_MOTOR_2"/>
    <property type="match status" value="1"/>
</dbReference>
<proteinExistence type="inferred from homology"/>
<gene>
    <name type="primary">CIN8</name>
    <name type="ordered locus">ACR010C</name>
</gene>
<comment type="function">
    <text evidence="1">Elongates the mitotic spindle by interacting with spindle microtubules to generate an outward force pushing spindle poles apart (By similarity). Following spindle assembly, CIN8 and KIP1 apparently act to oppose a force, possibly generated by KAR3, that draws separated poles back together (By similarity).</text>
</comment>
<comment type="subcellular location">
    <subcellularLocation>
        <location evidence="1">Cytoplasm</location>
        <location evidence="1">Cytoskeleton</location>
        <location evidence="1">Spindle</location>
    </subcellularLocation>
    <text evidence="1">Spindle microtubules that lie between the poles.</text>
</comment>
<comment type="similarity">
    <text evidence="3">Belongs to the TRAFAC class myosin-kinesin ATPase superfamily. Kinesin family. BimC subfamily.</text>
</comment>
<feature type="chain" id="PRO_0000125365" description="Kinesin-like protein CIN8">
    <location>
        <begin position="1"/>
        <end position="945"/>
    </location>
</feature>
<feature type="domain" description="Kinesin motor" evidence="3">
    <location>
        <begin position="22"/>
        <end position="409"/>
    </location>
</feature>
<feature type="region of interest" description="Disordered" evidence="4">
    <location>
        <begin position="190"/>
        <end position="243"/>
    </location>
</feature>
<feature type="coiled-coil region" evidence="2">
    <location>
        <begin position="450"/>
        <end position="562"/>
    </location>
</feature>
<feature type="coiled-coil region" evidence="2">
    <location>
        <begin position="634"/>
        <end position="675"/>
    </location>
</feature>
<feature type="compositionally biased region" description="Low complexity" evidence="4">
    <location>
        <begin position="193"/>
        <end position="208"/>
    </location>
</feature>
<feature type="compositionally biased region" description="Polar residues" evidence="4">
    <location>
        <begin position="234"/>
        <end position="243"/>
    </location>
</feature>
<feature type="binding site" evidence="3">
    <location>
        <begin position="114"/>
        <end position="121"/>
    </location>
    <ligand>
        <name>ATP</name>
        <dbReference type="ChEBI" id="CHEBI:30616"/>
    </ligand>
</feature>
<protein>
    <recommendedName>
        <fullName>Kinesin-like protein CIN8</fullName>
    </recommendedName>
</protein>
<evidence type="ECO:0000250" key="1">
    <source>
        <dbReference type="UniProtKB" id="P27895"/>
    </source>
</evidence>
<evidence type="ECO:0000255" key="2"/>
<evidence type="ECO:0000255" key="3">
    <source>
        <dbReference type="PROSITE-ProRule" id="PRU00283"/>
    </source>
</evidence>
<evidence type="ECO:0000256" key="4">
    <source>
        <dbReference type="SAM" id="MobiDB-lite"/>
    </source>
</evidence>
<reference key="1">
    <citation type="submission" date="2001-05" db="EMBL/GenBank/DDBJ databases">
        <title>Identification of kinesin-related proteins in the filamentous fungus Ashbya gossypii.</title>
        <authorList>
            <person name="Alberti-Segui C."/>
            <person name="Dietrich F.S."/>
            <person name="Philippsen P."/>
        </authorList>
    </citation>
    <scope>NUCLEOTIDE SEQUENCE [GENOMIC DNA]</scope>
</reference>
<reference key="2">
    <citation type="journal article" date="2004" name="Science">
        <title>The Ashbya gossypii genome as a tool for mapping the ancient Saccharomyces cerevisiae genome.</title>
        <authorList>
            <person name="Dietrich F.S."/>
            <person name="Voegeli S."/>
            <person name="Brachat S."/>
            <person name="Lerch A."/>
            <person name="Gates K."/>
            <person name="Steiner S."/>
            <person name="Mohr C."/>
            <person name="Poehlmann R."/>
            <person name="Luedi P."/>
            <person name="Choi S."/>
            <person name="Wing R.A."/>
            <person name="Flavier A."/>
            <person name="Gaffney T.D."/>
            <person name="Philippsen P."/>
        </authorList>
    </citation>
    <scope>NUCLEOTIDE SEQUENCE [LARGE SCALE GENOMIC DNA]</scope>
    <source>
        <strain>ATCC 10895 / CBS 109.51 / FGSC 9923 / NRRL Y-1056</strain>
    </source>
</reference>
<reference key="3">
    <citation type="journal article" date="2013" name="G3 (Bethesda)">
        <title>Genomes of Ashbya fungi isolated from insects reveal four mating-type loci, numerous translocations, lack of transposons, and distinct gene duplications.</title>
        <authorList>
            <person name="Dietrich F.S."/>
            <person name="Voegeli S."/>
            <person name="Kuo S."/>
            <person name="Philippsen P."/>
        </authorList>
    </citation>
    <scope>GENOME REANNOTATION</scope>
    <source>
        <strain>ATCC 10895 / CBS 109.51 / FGSC 9923 / NRRL Y-1056</strain>
    </source>
</reference>
<keyword id="KW-0067">ATP-binding</keyword>
<keyword id="KW-0131">Cell cycle</keyword>
<keyword id="KW-0132">Cell division</keyword>
<keyword id="KW-0175">Coiled coil</keyword>
<keyword id="KW-0963">Cytoplasm</keyword>
<keyword id="KW-0206">Cytoskeleton</keyword>
<keyword id="KW-0493">Microtubule</keyword>
<keyword id="KW-0498">Mitosis</keyword>
<keyword id="KW-0505">Motor protein</keyword>
<keyword id="KW-0547">Nucleotide-binding</keyword>
<keyword id="KW-1185">Reference proteome</keyword>
<name>CIN8_EREGS</name>
<organism>
    <name type="scientific">Eremothecium gossypii (strain ATCC 10895 / CBS 109.51 / FGSC 9923 / NRRL Y-1056)</name>
    <name type="common">Yeast</name>
    <name type="synonym">Ashbya gossypii</name>
    <dbReference type="NCBI Taxonomy" id="284811"/>
    <lineage>
        <taxon>Eukaryota</taxon>
        <taxon>Fungi</taxon>
        <taxon>Dikarya</taxon>
        <taxon>Ascomycota</taxon>
        <taxon>Saccharomycotina</taxon>
        <taxon>Saccharomycetes</taxon>
        <taxon>Saccharomycetales</taxon>
        <taxon>Saccharomycetaceae</taxon>
        <taxon>Eremothecium</taxon>
    </lineage>
</organism>
<sequence>MPDHEVQTRKSRMLDDAQEELNITVAVRCRGRNEREIKAKSSVVVTVPDVTGSNEVSINTTDEVGIAAKMNSRTYTVDKVFGPSADQSLIFKEIAEPLFDDFMKGYNCTVLVYGMTSTGKTYTMTGDEKLYDGQLSDSAGIIPRIMFKLFDALEATDSDFLVKCSYIELYNEELKDLLDESHDSSKRLRIFDSSSMNHSSRASSQSNSPREPEVAHNGFSRRRQRPPPVKANRMSATKQQLSESGSGIYVQNVQEFHIINAREGINVLQKGLKHRQVASTKMNDFSSRSHTIFTIMLYKNCDGELFRVSKMNLVDLAGSENISRSGAQNQRAKEAGSINQSLLTLGRVINSLADKSIHIPFRESKLTRLLQDSLGGNTKTALIATISPAKINADETSSTLEYAAKAKNIKNRPQLGALMMKDILVKNISSELAKIKSDFLSTKSKDGIYMSHEHYQEIVNDLENCQTEIQESKRQIESLTSQNNLLLKDKKASQEVTELQNSKIKKLQSTIEYLYDKIERQHHNETELATTIHKLKEALHTMQGSLKSYETHELRLQNDIKEVLYQGITSYRESMNQHLEKVKVSMLDKNLSIKENINNITTIFDDTLKSVEANGSDMCDTLVKLIKETPSMYLKEFNETVSSLKSELSSYSNALTNKLTEISEENNHLREYLDQHLFKNSTQEVLDLRMESVYQKVKNDSDQLLSKLVSMVGAHVEESRTLMVNSMKDTVNEIIDNERSLFQPIRDRWIASCDNINQCDASHQNFEAKSTSGLDKLKELSDASLKSSEDAVNKAKHRTDSFHDFVQKLCCDQSLKKQMHDISDKHRMLEDHFDDNVKYFKESSKGFEDMDCSIKKIIHEMSPEVGDIKSVETLMERINARTFSPVRPTGKTPSRQVLKNAITSKASSRSMSPIKTLDTNVRIISPVKRGTIEFGAEGPPTKKVR</sequence>
<accession>Q8J1G7</accession>